<comment type="function">
    <text evidence="1">Required for processing of 5.8S rRNA (short form) at site A3 and for 5'- and 3'-processing of pre-tRNA.</text>
</comment>
<comment type="subunit">
    <text evidence="1">Component of nuclear RNase P and RNase MRP complexes.</text>
</comment>
<comment type="subcellular location">
    <subcellularLocation>
        <location evidence="3">Cytoplasm</location>
    </subcellularLocation>
    <subcellularLocation>
        <location evidence="3">Nucleus</location>
    </subcellularLocation>
</comment>
<comment type="similarity">
    <text evidence="4">Belongs to the POP3 family.</text>
</comment>
<sequence length="201" mass="22596">MKKKQTKVKQTVKLVLRNPLSISWPIVDANTQEKLAQTLVQWLPASHKDILDSKLTVGLNSVNELLERCCQNAKDVTQPAVVFILHDQDSMLVTHMPQLVANANFYGSSKCRLVPLGFSAQALIAKKLGLSRAGAIAVQDDSPLWKYLKDLVMNIEEPQARWLSENPEYEVTKVEKIITSQKENQGTKKEGKNEKGNEFKK</sequence>
<proteinExistence type="inferred from homology"/>
<accession>O74450</accession>
<gene>
    <name type="primary">pop3</name>
    <name type="ORF">SPCC16C4.05</name>
</gene>
<organism>
    <name type="scientific">Schizosaccharomyces pombe (strain 972 / ATCC 24843)</name>
    <name type="common">Fission yeast</name>
    <dbReference type="NCBI Taxonomy" id="284812"/>
    <lineage>
        <taxon>Eukaryota</taxon>
        <taxon>Fungi</taxon>
        <taxon>Dikarya</taxon>
        <taxon>Ascomycota</taxon>
        <taxon>Taphrinomycotina</taxon>
        <taxon>Schizosaccharomycetes</taxon>
        <taxon>Schizosaccharomycetales</taxon>
        <taxon>Schizosaccharomycetaceae</taxon>
        <taxon>Schizosaccharomyces</taxon>
    </lineage>
</organism>
<protein>
    <recommendedName>
        <fullName>Ribonucleases P/MRP protein subunit pop3</fullName>
    </recommendedName>
    <alternativeName>
        <fullName>RNA-processing protein pop3</fullName>
    </alternativeName>
</protein>
<name>POP3_SCHPO</name>
<dbReference type="EMBL" id="CU329672">
    <property type="protein sequence ID" value="CAA20744.1"/>
    <property type="molecule type" value="Genomic_DNA"/>
</dbReference>
<dbReference type="PIR" id="T41095">
    <property type="entry name" value="T41095"/>
</dbReference>
<dbReference type="BioGRID" id="275549">
    <property type="interactions" value="2"/>
</dbReference>
<dbReference type="FunCoup" id="O74450">
    <property type="interactions" value="71"/>
</dbReference>
<dbReference type="STRING" id="284812.O74450"/>
<dbReference type="PaxDb" id="4896-SPCC16C4.05.1"/>
<dbReference type="EnsemblFungi" id="SPCC16C4.05.1">
    <property type="protein sequence ID" value="SPCC16C4.05.1:pep"/>
    <property type="gene ID" value="SPCC16C4.05"/>
</dbReference>
<dbReference type="KEGG" id="spo:2538975"/>
<dbReference type="PomBase" id="SPCC16C4.05"/>
<dbReference type="VEuPathDB" id="FungiDB:SPCC16C4.05"/>
<dbReference type="HOGENOM" id="CLU_1415940_0_0_1"/>
<dbReference type="InParanoid" id="O74450"/>
<dbReference type="OMA" id="LERCCQN"/>
<dbReference type="PRO" id="PR:O74450"/>
<dbReference type="Proteomes" id="UP000002485">
    <property type="component" value="Chromosome III"/>
</dbReference>
<dbReference type="GO" id="GO:0005829">
    <property type="term" value="C:cytosol"/>
    <property type="evidence" value="ECO:0007005"/>
    <property type="project" value="PomBase"/>
</dbReference>
<dbReference type="GO" id="GO:0005655">
    <property type="term" value="C:nucleolar ribonuclease P complex"/>
    <property type="evidence" value="ECO:0000318"/>
    <property type="project" value="GO_Central"/>
</dbReference>
<dbReference type="GO" id="GO:0005634">
    <property type="term" value="C:nucleus"/>
    <property type="evidence" value="ECO:0007005"/>
    <property type="project" value="PomBase"/>
</dbReference>
<dbReference type="GO" id="GO:0000172">
    <property type="term" value="C:ribonuclease MRP complex"/>
    <property type="evidence" value="ECO:0000269"/>
    <property type="project" value="PomBase"/>
</dbReference>
<dbReference type="GO" id="GO:0000447">
    <property type="term" value="P:endonucleolytic cleavage in ITS1 to separate SSU-rRNA from 5.8S rRNA and LSU-rRNA from tricistronic rRNA transcript (SSU-rRNA, 5.8S rRNA, LSU-rRNA)"/>
    <property type="evidence" value="ECO:0000314"/>
    <property type="project" value="PomBase"/>
</dbReference>
<dbReference type="GO" id="GO:0034965">
    <property type="term" value="P:intronic box C/D snoRNA processing"/>
    <property type="evidence" value="ECO:0000318"/>
    <property type="project" value="GO_Central"/>
</dbReference>
<dbReference type="GO" id="GO:0006364">
    <property type="term" value="P:rRNA processing"/>
    <property type="evidence" value="ECO:0000318"/>
    <property type="project" value="GO_Central"/>
</dbReference>
<dbReference type="GO" id="GO:0008033">
    <property type="term" value="P:tRNA processing"/>
    <property type="evidence" value="ECO:0000314"/>
    <property type="project" value="PomBase"/>
</dbReference>
<dbReference type="InterPro" id="IPR013241">
    <property type="entry name" value="RNase_P_Pop3"/>
</dbReference>
<dbReference type="PANTHER" id="PTHR28272">
    <property type="entry name" value="RIBONUCLEASES P/MRP PROTEIN SUBUNIT POP3"/>
    <property type="match status" value="1"/>
</dbReference>
<dbReference type="PANTHER" id="PTHR28272:SF1">
    <property type="entry name" value="RIBONUCLEASES P_MRP PROTEIN SUBUNIT POP3"/>
    <property type="match status" value="1"/>
</dbReference>
<dbReference type="Pfam" id="PF08228">
    <property type="entry name" value="RNase_P_pop3"/>
    <property type="match status" value="1"/>
</dbReference>
<keyword id="KW-0963">Cytoplasm</keyword>
<keyword id="KW-0539">Nucleus</keyword>
<keyword id="KW-1185">Reference proteome</keyword>
<keyword id="KW-0698">rRNA processing</keyword>
<keyword id="KW-0819">tRNA processing</keyword>
<feature type="chain" id="PRO_0000337991" description="Ribonucleases P/MRP protein subunit pop3">
    <location>
        <begin position="1"/>
        <end position="201"/>
    </location>
</feature>
<feature type="region of interest" description="Disordered" evidence="2">
    <location>
        <begin position="180"/>
        <end position="201"/>
    </location>
</feature>
<feature type="compositionally biased region" description="Basic and acidic residues" evidence="2">
    <location>
        <begin position="185"/>
        <end position="201"/>
    </location>
</feature>
<reference key="1">
    <citation type="journal article" date="2002" name="Nature">
        <title>The genome sequence of Schizosaccharomyces pombe.</title>
        <authorList>
            <person name="Wood V."/>
            <person name="Gwilliam R."/>
            <person name="Rajandream M.A."/>
            <person name="Lyne M.H."/>
            <person name="Lyne R."/>
            <person name="Stewart A."/>
            <person name="Sgouros J.G."/>
            <person name="Peat N."/>
            <person name="Hayles J."/>
            <person name="Baker S.G."/>
            <person name="Basham D."/>
            <person name="Bowman S."/>
            <person name="Brooks K."/>
            <person name="Brown D."/>
            <person name="Brown S."/>
            <person name="Chillingworth T."/>
            <person name="Churcher C.M."/>
            <person name="Collins M."/>
            <person name="Connor R."/>
            <person name="Cronin A."/>
            <person name="Davis P."/>
            <person name="Feltwell T."/>
            <person name="Fraser A."/>
            <person name="Gentles S."/>
            <person name="Goble A."/>
            <person name="Hamlin N."/>
            <person name="Harris D.E."/>
            <person name="Hidalgo J."/>
            <person name="Hodgson G."/>
            <person name="Holroyd S."/>
            <person name="Hornsby T."/>
            <person name="Howarth S."/>
            <person name="Huckle E.J."/>
            <person name="Hunt S."/>
            <person name="Jagels K."/>
            <person name="James K.D."/>
            <person name="Jones L."/>
            <person name="Jones M."/>
            <person name="Leather S."/>
            <person name="McDonald S."/>
            <person name="McLean J."/>
            <person name="Mooney P."/>
            <person name="Moule S."/>
            <person name="Mungall K.L."/>
            <person name="Murphy L.D."/>
            <person name="Niblett D."/>
            <person name="Odell C."/>
            <person name="Oliver K."/>
            <person name="O'Neil S."/>
            <person name="Pearson D."/>
            <person name="Quail M.A."/>
            <person name="Rabbinowitsch E."/>
            <person name="Rutherford K.M."/>
            <person name="Rutter S."/>
            <person name="Saunders D."/>
            <person name="Seeger K."/>
            <person name="Sharp S."/>
            <person name="Skelton J."/>
            <person name="Simmonds M.N."/>
            <person name="Squares R."/>
            <person name="Squares S."/>
            <person name="Stevens K."/>
            <person name="Taylor K."/>
            <person name="Taylor R.G."/>
            <person name="Tivey A."/>
            <person name="Walsh S.V."/>
            <person name="Warren T."/>
            <person name="Whitehead S."/>
            <person name="Woodward J.R."/>
            <person name="Volckaert G."/>
            <person name="Aert R."/>
            <person name="Robben J."/>
            <person name="Grymonprez B."/>
            <person name="Weltjens I."/>
            <person name="Vanstreels E."/>
            <person name="Rieger M."/>
            <person name="Schaefer M."/>
            <person name="Mueller-Auer S."/>
            <person name="Gabel C."/>
            <person name="Fuchs M."/>
            <person name="Duesterhoeft A."/>
            <person name="Fritzc C."/>
            <person name="Holzer E."/>
            <person name="Moestl D."/>
            <person name="Hilbert H."/>
            <person name="Borzym K."/>
            <person name="Langer I."/>
            <person name="Beck A."/>
            <person name="Lehrach H."/>
            <person name="Reinhardt R."/>
            <person name="Pohl T.M."/>
            <person name="Eger P."/>
            <person name="Zimmermann W."/>
            <person name="Wedler H."/>
            <person name="Wambutt R."/>
            <person name="Purnelle B."/>
            <person name="Goffeau A."/>
            <person name="Cadieu E."/>
            <person name="Dreano S."/>
            <person name="Gloux S."/>
            <person name="Lelaure V."/>
            <person name="Mottier S."/>
            <person name="Galibert F."/>
            <person name="Aves S.J."/>
            <person name="Xiang Z."/>
            <person name="Hunt C."/>
            <person name="Moore K."/>
            <person name="Hurst S.M."/>
            <person name="Lucas M."/>
            <person name="Rochet M."/>
            <person name="Gaillardin C."/>
            <person name="Tallada V.A."/>
            <person name="Garzon A."/>
            <person name="Thode G."/>
            <person name="Daga R.R."/>
            <person name="Cruzado L."/>
            <person name="Jimenez J."/>
            <person name="Sanchez M."/>
            <person name="del Rey F."/>
            <person name="Benito J."/>
            <person name="Dominguez A."/>
            <person name="Revuelta J.L."/>
            <person name="Moreno S."/>
            <person name="Armstrong J."/>
            <person name="Forsburg S.L."/>
            <person name="Cerutti L."/>
            <person name="Lowe T."/>
            <person name="McCombie W.R."/>
            <person name="Paulsen I."/>
            <person name="Potashkin J."/>
            <person name="Shpakovski G.V."/>
            <person name="Ussery D."/>
            <person name="Barrell B.G."/>
            <person name="Nurse P."/>
        </authorList>
    </citation>
    <scope>NUCLEOTIDE SEQUENCE [LARGE SCALE GENOMIC DNA]</scope>
    <source>
        <strain>972 / ATCC 24843</strain>
    </source>
</reference>
<reference key="2">
    <citation type="journal article" date="2006" name="Nat. Biotechnol.">
        <title>ORFeome cloning and global analysis of protein localization in the fission yeast Schizosaccharomyces pombe.</title>
        <authorList>
            <person name="Matsuyama A."/>
            <person name="Arai R."/>
            <person name="Yashiroda Y."/>
            <person name="Shirai A."/>
            <person name="Kamata A."/>
            <person name="Sekido S."/>
            <person name="Kobayashi Y."/>
            <person name="Hashimoto A."/>
            <person name="Hamamoto M."/>
            <person name="Hiraoka Y."/>
            <person name="Horinouchi S."/>
            <person name="Yoshida M."/>
        </authorList>
    </citation>
    <scope>SUBCELLULAR LOCATION [LARGE SCALE ANALYSIS]</scope>
</reference>
<evidence type="ECO:0000250" key="1"/>
<evidence type="ECO:0000256" key="2">
    <source>
        <dbReference type="SAM" id="MobiDB-lite"/>
    </source>
</evidence>
<evidence type="ECO:0000269" key="3">
    <source>
    </source>
</evidence>
<evidence type="ECO:0000305" key="4"/>